<name>HISZ_BACC7</name>
<protein>
    <recommendedName>
        <fullName evidence="1">ATP phosphoribosyltransferase regulatory subunit</fullName>
    </recommendedName>
</protein>
<accession>B7HKC8</accession>
<sequence length="420" mass="48838">MTKWKRANPNGTRDYLFEECTLIEEVEQKLRRTFLERGYEEIRTPTIEFYDVFAFQSRPIDEEKMYKFFDEKGRIIVLRPDMTIPLARVIGTQRCDTPLKVTYSGNVFRANESLTGKYNEIVQSGIEIIGIDNVRAEIECVISVIQSLQKLKVQSFTIEIGQVQLYKCIVKKLSIHEEEEKVLRTYIESKNYAALSNFIRDKKLDRCDETVKLLEKLPRLFGNLEVIEEAEKLASSNEMKMAITRVKEIYEAIDKLGYGSYISIDLGMIQHLDYYTGVIFKGYIYEIGEEIVSGGRYDELIGNFGEMLPAVGLAVQVNQIVKALQEQQKPYERKRIDIMIHYELNRLAEAERLRNLLQKDGKKVALSLFSNLNDTFQFARKNQIVTVVEAKNESLVEYVWKEKWVVQKEGETSCVTFKLR</sequence>
<evidence type="ECO:0000255" key="1">
    <source>
        <dbReference type="HAMAP-Rule" id="MF_00125"/>
    </source>
</evidence>
<dbReference type="EMBL" id="CP001177">
    <property type="protein sequence ID" value="ACJ81603.1"/>
    <property type="molecule type" value="Genomic_DNA"/>
</dbReference>
<dbReference type="SMR" id="B7HKC8"/>
<dbReference type="KEGG" id="bcr:BCAH187_A1563"/>
<dbReference type="HOGENOM" id="CLU_025113_0_0_9"/>
<dbReference type="UniPathway" id="UPA00031">
    <property type="reaction ID" value="UER00006"/>
</dbReference>
<dbReference type="Proteomes" id="UP000002214">
    <property type="component" value="Chromosome"/>
</dbReference>
<dbReference type="GO" id="GO:0005737">
    <property type="term" value="C:cytoplasm"/>
    <property type="evidence" value="ECO:0007669"/>
    <property type="project" value="UniProtKB-SubCell"/>
</dbReference>
<dbReference type="GO" id="GO:0140096">
    <property type="term" value="F:catalytic activity, acting on a protein"/>
    <property type="evidence" value="ECO:0007669"/>
    <property type="project" value="UniProtKB-ARBA"/>
</dbReference>
<dbReference type="GO" id="GO:0004821">
    <property type="term" value="F:histidine-tRNA ligase activity"/>
    <property type="evidence" value="ECO:0007669"/>
    <property type="project" value="TreeGrafter"/>
</dbReference>
<dbReference type="GO" id="GO:0016740">
    <property type="term" value="F:transferase activity"/>
    <property type="evidence" value="ECO:0007669"/>
    <property type="project" value="UniProtKB-ARBA"/>
</dbReference>
<dbReference type="GO" id="GO:0006427">
    <property type="term" value="P:histidyl-tRNA aminoacylation"/>
    <property type="evidence" value="ECO:0007669"/>
    <property type="project" value="TreeGrafter"/>
</dbReference>
<dbReference type="GO" id="GO:0000105">
    <property type="term" value="P:L-histidine biosynthetic process"/>
    <property type="evidence" value="ECO:0007669"/>
    <property type="project" value="UniProtKB-UniRule"/>
</dbReference>
<dbReference type="CDD" id="cd00773">
    <property type="entry name" value="HisRS-like_core"/>
    <property type="match status" value="1"/>
</dbReference>
<dbReference type="FunFam" id="3.30.930.10:FF:000060">
    <property type="entry name" value="ATP phosphoribosyltransferase regulatory subunit"/>
    <property type="match status" value="1"/>
</dbReference>
<dbReference type="Gene3D" id="3.30.930.10">
    <property type="entry name" value="Bira Bifunctional Protein, Domain 2"/>
    <property type="match status" value="1"/>
</dbReference>
<dbReference type="HAMAP" id="MF_00125">
    <property type="entry name" value="HisZ"/>
    <property type="match status" value="1"/>
</dbReference>
<dbReference type="InterPro" id="IPR006195">
    <property type="entry name" value="aa-tRNA-synth_II"/>
</dbReference>
<dbReference type="InterPro" id="IPR045864">
    <property type="entry name" value="aa-tRNA-synth_II/BPL/LPL"/>
</dbReference>
<dbReference type="InterPro" id="IPR041715">
    <property type="entry name" value="HisRS-like_core"/>
</dbReference>
<dbReference type="InterPro" id="IPR004516">
    <property type="entry name" value="HisRS/HisZ"/>
</dbReference>
<dbReference type="InterPro" id="IPR004517">
    <property type="entry name" value="HisZ"/>
</dbReference>
<dbReference type="NCBIfam" id="TIGR00443">
    <property type="entry name" value="hisZ_biosyn_reg"/>
    <property type="match status" value="1"/>
</dbReference>
<dbReference type="NCBIfam" id="NF008938">
    <property type="entry name" value="PRK12292.1-6"/>
    <property type="match status" value="1"/>
</dbReference>
<dbReference type="PANTHER" id="PTHR43707:SF6">
    <property type="entry name" value="ATP PHOSPHORIBOSYLTRANSFERASE REGULATORY SUBUNIT"/>
    <property type="match status" value="1"/>
</dbReference>
<dbReference type="PANTHER" id="PTHR43707">
    <property type="entry name" value="HISTIDYL-TRNA SYNTHETASE"/>
    <property type="match status" value="1"/>
</dbReference>
<dbReference type="Pfam" id="PF13393">
    <property type="entry name" value="tRNA-synt_His"/>
    <property type="match status" value="1"/>
</dbReference>
<dbReference type="PIRSF" id="PIRSF001549">
    <property type="entry name" value="His-tRNA_synth"/>
    <property type="match status" value="1"/>
</dbReference>
<dbReference type="SUPFAM" id="SSF55681">
    <property type="entry name" value="Class II aaRS and biotin synthetases"/>
    <property type="match status" value="1"/>
</dbReference>
<dbReference type="PROSITE" id="PS50862">
    <property type="entry name" value="AA_TRNA_LIGASE_II"/>
    <property type="match status" value="1"/>
</dbReference>
<comment type="function">
    <text evidence="1">Required for the first step of histidine biosynthesis. May allow the feedback regulation of ATP phosphoribosyltransferase activity by histidine.</text>
</comment>
<comment type="pathway">
    <text evidence="1">Amino-acid biosynthesis; L-histidine biosynthesis; L-histidine from 5-phospho-alpha-D-ribose 1-diphosphate: step 1/9.</text>
</comment>
<comment type="subunit">
    <text evidence="1">Heteromultimer composed of HisG and HisZ subunits.</text>
</comment>
<comment type="subcellular location">
    <subcellularLocation>
        <location evidence="1">Cytoplasm</location>
    </subcellularLocation>
</comment>
<comment type="miscellaneous">
    <text>This function is generally fulfilled by the C-terminal part of HisG, which is missing in some bacteria such as this one.</text>
</comment>
<comment type="similarity">
    <text evidence="1">Belongs to the class-II aminoacyl-tRNA synthetase family. HisZ subfamily.</text>
</comment>
<gene>
    <name evidence="1" type="primary">hisZ</name>
    <name type="ordered locus">BCAH187_A1563</name>
</gene>
<proteinExistence type="inferred from homology"/>
<reference key="1">
    <citation type="submission" date="2008-10" db="EMBL/GenBank/DDBJ databases">
        <title>Genome sequence of Bacillus cereus AH187.</title>
        <authorList>
            <person name="Dodson R.J."/>
            <person name="Durkin A.S."/>
            <person name="Rosovitz M.J."/>
            <person name="Rasko D.A."/>
            <person name="Kolsto A.B."/>
            <person name="Okstad O.A."/>
            <person name="Ravel J."/>
            <person name="Sutton G."/>
        </authorList>
    </citation>
    <scope>NUCLEOTIDE SEQUENCE [LARGE SCALE GENOMIC DNA]</scope>
    <source>
        <strain>AH187</strain>
    </source>
</reference>
<organism>
    <name type="scientific">Bacillus cereus (strain AH187)</name>
    <dbReference type="NCBI Taxonomy" id="405534"/>
    <lineage>
        <taxon>Bacteria</taxon>
        <taxon>Bacillati</taxon>
        <taxon>Bacillota</taxon>
        <taxon>Bacilli</taxon>
        <taxon>Bacillales</taxon>
        <taxon>Bacillaceae</taxon>
        <taxon>Bacillus</taxon>
        <taxon>Bacillus cereus group</taxon>
    </lineage>
</organism>
<feature type="chain" id="PRO_1000117673" description="ATP phosphoribosyltransferase regulatory subunit">
    <location>
        <begin position="1"/>
        <end position="420"/>
    </location>
</feature>
<keyword id="KW-0028">Amino-acid biosynthesis</keyword>
<keyword id="KW-0963">Cytoplasm</keyword>
<keyword id="KW-0368">Histidine biosynthesis</keyword>